<gene>
    <name type="primary">PPY</name>
</gene>
<organism>
    <name type="scientific">Struthio camelus</name>
    <name type="common">Common ostrich</name>
    <dbReference type="NCBI Taxonomy" id="8801"/>
    <lineage>
        <taxon>Eukaryota</taxon>
        <taxon>Metazoa</taxon>
        <taxon>Chordata</taxon>
        <taxon>Craniata</taxon>
        <taxon>Vertebrata</taxon>
        <taxon>Euteleostomi</taxon>
        <taxon>Archelosauria</taxon>
        <taxon>Archosauria</taxon>
        <taxon>Dinosauria</taxon>
        <taxon>Saurischia</taxon>
        <taxon>Theropoda</taxon>
        <taxon>Coelurosauria</taxon>
        <taxon>Aves</taxon>
        <taxon>Palaeognathae</taxon>
        <taxon>Struthioniformes</taxon>
        <taxon>Struthionidae</taxon>
        <taxon>Struthio</taxon>
    </lineage>
</organism>
<accession>P11967</accession>
<keyword id="KW-0027">Amidation</keyword>
<keyword id="KW-0903">Direct protein sequencing</keyword>
<keyword id="KW-0372">Hormone</keyword>
<keyword id="KW-0964">Secreted</keyword>
<dbReference type="PIR" id="A28578">
    <property type="entry name" value="A28578"/>
</dbReference>
<dbReference type="SMR" id="P11967"/>
<dbReference type="GO" id="GO:0005615">
    <property type="term" value="C:extracellular space"/>
    <property type="evidence" value="ECO:0007669"/>
    <property type="project" value="TreeGrafter"/>
</dbReference>
<dbReference type="GO" id="GO:0005184">
    <property type="term" value="F:neuropeptide hormone activity"/>
    <property type="evidence" value="ECO:0007669"/>
    <property type="project" value="TreeGrafter"/>
</dbReference>
<dbReference type="GO" id="GO:0031841">
    <property type="term" value="F:neuropeptide Y receptor binding"/>
    <property type="evidence" value="ECO:0007669"/>
    <property type="project" value="TreeGrafter"/>
</dbReference>
<dbReference type="GO" id="GO:0007631">
    <property type="term" value="P:feeding behavior"/>
    <property type="evidence" value="ECO:0007669"/>
    <property type="project" value="TreeGrafter"/>
</dbReference>
<dbReference type="GO" id="GO:0007218">
    <property type="term" value="P:neuropeptide signaling pathway"/>
    <property type="evidence" value="ECO:0007669"/>
    <property type="project" value="TreeGrafter"/>
</dbReference>
<dbReference type="CDD" id="cd00126">
    <property type="entry name" value="PAH"/>
    <property type="match status" value="1"/>
</dbReference>
<dbReference type="Gene3D" id="6.10.250.900">
    <property type="match status" value="1"/>
</dbReference>
<dbReference type="InterPro" id="IPR001955">
    <property type="entry name" value="Pancreatic_hormone-like"/>
</dbReference>
<dbReference type="InterPro" id="IPR020392">
    <property type="entry name" value="Pancreatic_hormone-like_CS"/>
</dbReference>
<dbReference type="PANTHER" id="PTHR10533">
    <property type="entry name" value="NEUROPEPTIDE Y/PANCREATIC HORMONE/PEPTIDE YY"/>
    <property type="match status" value="1"/>
</dbReference>
<dbReference type="PANTHER" id="PTHR10533:SF5">
    <property type="entry name" value="PRO-NEUROPEPTIDE Y"/>
    <property type="match status" value="1"/>
</dbReference>
<dbReference type="Pfam" id="PF00159">
    <property type="entry name" value="Hormone_3"/>
    <property type="match status" value="1"/>
</dbReference>
<dbReference type="PRINTS" id="PR00278">
    <property type="entry name" value="PANCHORMONE"/>
</dbReference>
<dbReference type="SMART" id="SM00309">
    <property type="entry name" value="PAH"/>
    <property type="match status" value="1"/>
</dbReference>
<dbReference type="PROSITE" id="PS00265">
    <property type="entry name" value="PANCREATIC_HORMONE_1"/>
    <property type="match status" value="1"/>
</dbReference>
<dbReference type="PROSITE" id="PS50276">
    <property type="entry name" value="PANCREATIC_HORMONE_2"/>
    <property type="match status" value="1"/>
</dbReference>
<feature type="peptide" id="PRO_0000044806" description="Pancreatic polypeptide">
    <location>
        <begin position="1"/>
        <end position="36"/>
    </location>
</feature>
<feature type="modified residue" description="Tyrosine amide" evidence="1">
    <location>
        <position position="36"/>
    </location>
</feature>
<protein>
    <recommendedName>
        <fullName evidence="3">Pancreatic polypeptide</fullName>
        <shortName evidence="3">PP</shortName>
    </recommendedName>
</protein>
<proteinExistence type="evidence at protein level"/>
<evidence type="ECO:0000250" key="1"/>
<evidence type="ECO:0000250" key="2">
    <source>
        <dbReference type="UniProtKB" id="P01298"/>
    </source>
</evidence>
<evidence type="ECO:0000303" key="3">
    <source>
    </source>
</evidence>
<evidence type="ECO:0000305" key="4"/>
<reference key="1">
    <citation type="journal article" date="1987" name="Int. J. Pept. Protein Res.">
        <title>Purification and primary structure of ostrich pancreatic polypeptide.</title>
        <authorList>
            <person name="Litthauer D."/>
            <person name="Oelofsen W."/>
        </authorList>
    </citation>
    <scope>PROTEIN SEQUENCE</scope>
</reference>
<comment type="function">
    <text evidence="2">Hormone secreted by pancreatic cells that acts as a regulator of pancreatic and gastrointestinal functions.</text>
</comment>
<comment type="subcellular location">
    <subcellularLocation>
        <location evidence="2">Secreted</location>
    </subcellularLocation>
</comment>
<comment type="similarity">
    <text evidence="4">Belongs to the NPY family.</text>
</comment>
<name>PAHO_STRCA</name>
<sequence>GPAQPTYPGDDAPVEDLVRFYDNLQQYLNVVTRHRY</sequence>